<feature type="chain" id="PRO_0000420882" description="Basic phospholipase A2 homolog Gln49-PLA2">
    <location>
        <begin position="1"/>
        <end position="122"/>
    </location>
</feature>
<feature type="disulfide bond" evidence="1">
    <location>
        <begin position="26"/>
        <end position="115"/>
    </location>
</feature>
<feature type="disulfide bond" evidence="1">
    <location>
        <begin position="28"/>
        <end position="44"/>
    </location>
</feature>
<feature type="disulfide bond" evidence="1">
    <location>
        <begin position="43"/>
        <end position="95"/>
    </location>
</feature>
<feature type="disulfide bond" evidence="1">
    <location>
        <begin position="49"/>
        <end position="122"/>
    </location>
</feature>
<feature type="disulfide bond" evidence="1">
    <location>
        <begin position="50"/>
        <end position="88"/>
    </location>
</feature>
<feature type="disulfide bond" evidence="1">
    <location>
        <begin position="57"/>
        <end position="81"/>
    </location>
</feature>
<feature type="disulfide bond" evidence="1">
    <location>
        <begin position="75"/>
        <end position="86"/>
    </location>
</feature>
<protein>
    <recommendedName>
        <fullName>Basic phospholipase A2 homolog Gln49-PLA2</fullName>
        <shortName>svPLA2 homolog</shortName>
    </recommendedName>
</protein>
<reference key="1">
    <citation type="journal article" date="2005" name="Int. J. Biochem. Cell Biol.">
        <title>Purification, characterization and gene cloning of a novel phospholipase A2 from the venom of Agkistrodon blomhoffii ussurensis.</title>
        <authorList>
            <person name="Bao Y."/>
            <person name="Bu P."/>
            <person name="Jin L."/>
            <person name="Hongxia W."/>
            <person name="Yang Q."/>
            <person name="An L."/>
        </authorList>
    </citation>
    <scope>NUCLEOTIDE SEQUENCE [MRNA]</scope>
    <scope>PROTEIN SEQUENCE OF 1-21</scope>
    <scope>FUNCTION</scope>
    <scope>BIOASSAY</scope>
    <scope>MASS SPECTROMETRY</scope>
    <scope>TOXIC DOSE</scope>
    <source>
        <tissue>Venom</tissue>
        <tissue>Venom gland</tissue>
    </source>
</reference>
<reference key="2">
    <citation type="journal article" date="2007" name="J. Appl. Toxicol.">
        <title>Neurotoxic activity of Gln49 phospholipase A(2) from Gloydius ussuriensis snake venom.</title>
        <authorList>
            <person name="Chang Y."/>
            <person name="Li Y."/>
            <person name="Bao Y."/>
            <person name="An L."/>
        </authorList>
    </citation>
    <scope>FUNCTION AS A NEUROTOXIN</scope>
    <scope>TOXIC DOSE</scope>
</reference>
<reference key="3">
    <citation type="journal article" date="2010" name="Appl. Biochem. Biotechnol.">
        <title>Mechanisms of analgesic action of Gln49-PLA(2) from Gloydius ussurensis snake venom.</title>
        <authorList>
            <person name="Zhang Y."/>
            <person name="Jiang B."/>
            <person name="Li W."/>
            <person name="Zhou C."/>
            <person name="Ji F."/>
            <person name="Xie Q."/>
            <person name="Sun X."/>
            <person name="An L."/>
            <person name="Bao Y."/>
        </authorList>
    </citation>
    <scope>FUNCTION</scope>
</reference>
<name>PA2H_GLOUS</name>
<comment type="function">
    <text evidence="2 3 4">Snake venom phospholipase A2 (PLA2) homolog that shows local myotoxicity, apparent anticoagulant activity (PubMed:15618013), and neurotoxicity (PubMed:17299814). Shows analgesic effect on mice due to a decrease of action potentials and nerve conduction velocity. These effects are caused by inhibition of voltage-gated ion channels (potassium (Kv) and sodium (Nav)) (PubMed:19277489). In addition, analgesic effects are antagonized by naloxone, implying the mechanism of action is correlated with opioid receptors (probably indirectly) (PubMed:17299814). Does not show detectable PLA2 activity on egg yolk phospholipids (PubMed:15618013).</text>
</comment>
<comment type="subunit">
    <text>Monomer.</text>
</comment>
<comment type="subcellular location">
    <subcellularLocation>
        <location>Secreted</location>
    </subcellularLocation>
</comment>
<comment type="tissue specificity">
    <text>Expressed by the venom gland.</text>
</comment>
<comment type="mass spectrometry" mass="13881.85" error="0.33" method="Unknown" evidence="2"/>
<comment type="toxic dose">
    <text evidence="2 3">LD(50) is 18.2 mg/kg by intraperitoneal injection into mice.</text>
</comment>
<comment type="miscellaneous">
    <text evidence="6">Negative results: does not show hemorrhagic activities.</text>
</comment>
<comment type="similarity">
    <text evidence="5">Belongs to the phospholipase A2 family. Group II subfamily. Q49 sub-subfamily.</text>
</comment>
<comment type="caution">
    <text evidence="5">Does not bind calcium as one of the calcium-binding sites is lost (Asp-&gt;Gln in position 48, which corresponds to 'Gln-49' in the current nomenclature).</text>
</comment>
<evidence type="ECO:0000250" key="1"/>
<evidence type="ECO:0000269" key="2">
    <source>
    </source>
</evidence>
<evidence type="ECO:0000269" key="3">
    <source>
    </source>
</evidence>
<evidence type="ECO:0000269" key="4">
    <source>
    </source>
</evidence>
<evidence type="ECO:0000305" key="5"/>
<evidence type="ECO:0000305" key="6">
    <source>
    </source>
</evidence>
<accession>P0DKU1</accession>
<keyword id="KW-0903">Direct protein sequencing</keyword>
<keyword id="KW-1015">Disulfide bond</keyword>
<keyword id="KW-1199">Hemostasis impairing toxin</keyword>
<keyword id="KW-0872">Ion channel impairing toxin</keyword>
<keyword id="KW-0959">Myotoxin</keyword>
<keyword id="KW-0528">Neurotoxin</keyword>
<keyword id="KW-0632">Potassium channel impairing toxin</keyword>
<keyword id="KW-0964">Secreted</keyword>
<keyword id="KW-0800">Toxin</keyword>
<keyword id="KW-1220">Voltage-gated potassium channel impairing toxin</keyword>
<keyword id="KW-0738">Voltage-gated sodium channel impairing toxin</keyword>
<sequence length="122" mass="13896">SLLQFRKMIKKMTGKEPVVSYAFYGCYCGSGGRGKPKDATDRCCFVHQCCYEKVTGCDPKWDDYTYSWKDGDIVCGGDDPCKKEVCECDRAAAICFRDNLKTYKKIYMAYPDIFCSSKSEKC</sequence>
<dbReference type="SMR" id="P0DKU1"/>
<dbReference type="GO" id="GO:0005576">
    <property type="term" value="C:extracellular region"/>
    <property type="evidence" value="ECO:0007669"/>
    <property type="project" value="UniProtKB-SubCell"/>
</dbReference>
<dbReference type="GO" id="GO:0005509">
    <property type="term" value="F:calcium ion binding"/>
    <property type="evidence" value="ECO:0007669"/>
    <property type="project" value="InterPro"/>
</dbReference>
<dbReference type="GO" id="GO:0047498">
    <property type="term" value="F:calcium-dependent phospholipase A2 activity"/>
    <property type="evidence" value="ECO:0007669"/>
    <property type="project" value="TreeGrafter"/>
</dbReference>
<dbReference type="GO" id="GO:0005543">
    <property type="term" value="F:phospholipid binding"/>
    <property type="evidence" value="ECO:0007669"/>
    <property type="project" value="TreeGrafter"/>
</dbReference>
<dbReference type="GO" id="GO:0015459">
    <property type="term" value="F:potassium channel regulator activity"/>
    <property type="evidence" value="ECO:0007669"/>
    <property type="project" value="UniProtKB-KW"/>
</dbReference>
<dbReference type="GO" id="GO:0017080">
    <property type="term" value="F:sodium channel regulator activity"/>
    <property type="evidence" value="ECO:0007669"/>
    <property type="project" value="UniProtKB-KW"/>
</dbReference>
<dbReference type="GO" id="GO:0090729">
    <property type="term" value="F:toxin activity"/>
    <property type="evidence" value="ECO:0007669"/>
    <property type="project" value="UniProtKB-KW"/>
</dbReference>
<dbReference type="GO" id="GO:0050482">
    <property type="term" value="P:arachidonate secretion"/>
    <property type="evidence" value="ECO:0007669"/>
    <property type="project" value="InterPro"/>
</dbReference>
<dbReference type="GO" id="GO:0016042">
    <property type="term" value="P:lipid catabolic process"/>
    <property type="evidence" value="ECO:0007669"/>
    <property type="project" value="InterPro"/>
</dbReference>
<dbReference type="GO" id="GO:0042130">
    <property type="term" value="P:negative regulation of T cell proliferation"/>
    <property type="evidence" value="ECO:0007669"/>
    <property type="project" value="TreeGrafter"/>
</dbReference>
<dbReference type="GO" id="GO:0006644">
    <property type="term" value="P:phospholipid metabolic process"/>
    <property type="evidence" value="ECO:0007669"/>
    <property type="project" value="InterPro"/>
</dbReference>
<dbReference type="CDD" id="cd00125">
    <property type="entry name" value="PLA2c"/>
    <property type="match status" value="1"/>
</dbReference>
<dbReference type="FunFam" id="1.20.90.10:FF:000001">
    <property type="entry name" value="Basic phospholipase A2 homolog"/>
    <property type="match status" value="1"/>
</dbReference>
<dbReference type="Gene3D" id="1.20.90.10">
    <property type="entry name" value="Phospholipase A2 domain"/>
    <property type="match status" value="1"/>
</dbReference>
<dbReference type="InterPro" id="IPR001211">
    <property type="entry name" value="PLipase_A2"/>
</dbReference>
<dbReference type="InterPro" id="IPR033112">
    <property type="entry name" value="PLipase_A2_Asp_AS"/>
</dbReference>
<dbReference type="InterPro" id="IPR016090">
    <property type="entry name" value="PLipase_A2_dom"/>
</dbReference>
<dbReference type="InterPro" id="IPR036444">
    <property type="entry name" value="PLipase_A2_dom_sf"/>
</dbReference>
<dbReference type="InterPro" id="IPR033113">
    <property type="entry name" value="PLipase_A2_His_AS"/>
</dbReference>
<dbReference type="PANTHER" id="PTHR11716">
    <property type="entry name" value="PHOSPHOLIPASE A2 FAMILY MEMBER"/>
    <property type="match status" value="1"/>
</dbReference>
<dbReference type="PANTHER" id="PTHR11716:SF9">
    <property type="entry name" value="PHOSPHOLIPASE A2, MEMBRANE ASSOCIATED"/>
    <property type="match status" value="1"/>
</dbReference>
<dbReference type="Pfam" id="PF00068">
    <property type="entry name" value="Phospholip_A2_1"/>
    <property type="match status" value="1"/>
</dbReference>
<dbReference type="PRINTS" id="PR00389">
    <property type="entry name" value="PHPHLIPASEA2"/>
</dbReference>
<dbReference type="SMART" id="SM00085">
    <property type="entry name" value="PA2c"/>
    <property type="match status" value="1"/>
</dbReference>
<dbReference type="SUPFAM" id="SSF48619">
    <property type="entry name" value="Phospholipase A2, PLA2"/>
    <property type="match status" value="1"/>
</dbReference>
<dbReference type="PROSITE" id="PS00119">
    <property type="entry name" value="PA2_ASP"/>
    <property type="match status" value="1"/>
</dbReference>
<dbReference type="PROSITE" id="PS00118">
    <property type="entry name" value="PA2_HIS"/>
    <property type="match status" value="1"/>
</dbReference>
<proteinExistence type="evidence at protein level"/>
<organism>
    <name type="scientific">Gloydius ussuriensis</name>
    <name type="common">Ussuri mamushi</name>
    <name type="synonym">Gloydius blomhoffii ussuriensis</name>
    <dbReference type="NCBI Taxonomy" id="35671"/>
    <lineage>
        <taxon>Eukaryota</taxon>
        <taxon>Metazoa</taxon>
        <taxon>Chordata</taxon>
        <taxon>Craniata</taxon>
        <taxon>Vertebrata</taxon>
        <taxon>Euteleostomi</taxon>
        <taxon>Lepidosauria</taxon>
        <taxon>Squamata</taxon>
        <taxon>Bifurcata</taxon>
        <taxon>Unidentata</taxon>
        <taxon>Episquamata</taxon>
        <taxon>Toxicofera</taxon>
        <taxon>Serpentes</taxon>
        <taxon>Colubroidea</taxon>
        <taxon>Viperidae</taxon>
        <taxon>Crotalinae</taxon>
        <taxon>Gloydius</taxon>
    </lineage>
</organism>